<organism>
    <name type="scientific">Bos taurus</name>
    <name type="common">Bovine</name>
    <dbReference type="NCBI Taxonomy" id="9913"/>
    <lineage>
        <taxon>Eukaryota</taxon>
        <taxon>Metazoa</taxon>
        <taxon>Chordata</taxon>
        <taxon>Craniata</taxon>
        <taxon>Vertebrata</taxon>
        <taxon>Euteleostomi</taxon>
        <taxon>Mammalia</taxon>
        <taxon>Eutheria</taxon>
        <taxon>Laurasiatheria</taxon>
        <taxon>Artiodactyla</taxon>
        <taxon>Ruminantia</taxon>
        <taxon>Pecora</taxon>
        <taxon>Bovidae</taxon>
        <taxon>Bovinae</taxon>
        <taxon>Bos</taxon>
    </lineage>
</organism>
<sequence length="126" mass="13923">MPEPSKSAPAPKKGSKKAVTKAQKKDGKKRKRSRKESYSVYVYKVLKQVHPDTGISSKAMGNMNSFVNDIFERIAGEASRLAHYNKRSTITSREIQTAVRLLLPGELAKHAVSEGTKAVTKYTSSK</sequence>
<gene>
    <name type="primary">H2BC15</name>
</gene>
<name>H2B1N_BOVIN</name>
<protein>
    <recommendedName>
        <fullName>Histone H2B type 1-N</fullName>
    </recommendedName>
</protein>
<proteinExistence type="evidence at protein level"/>
<reference key="1">
    <citation type="submission" date="2005-11" db="EMBL/GenBank/DDBJ databases">
        <authorList>
            <consortium name="NIH - Mammalian Gene Collection (MGC) project"/>
        </authorList>
    </citation>
    <scope>NUCLEOTIDE SEQUENCE [LARGE SCALE MRNA]</scope>
    <source>
        <strain>Crossbred X Angus</strain>
        <tissue>Liver</tissue>
    </source>
</reference>
<reference key="2">
    <citation type="journal article" date="1989" name="Biochemistry">
        <title>Ubiquitinated histone H2B is preferentially located in transcriptionally active chromatin.</title>
        <authorList>
            <person name="Nickel B.E."/>
            <person name="Allis C.D."/>
            <person name="Davie J.R."/>
        </authorList>
    </citation>
    <scope>UBIQUITINATION</scope>
</reference>
<evidence type="ECO:0000250" key="1">
    <source>
        <dbReference type="UniProtKB" id="P23527"/>
    </source>
</evidence>
<evidence type="ECO:0000250" key="2">
    <source>
        <dbReference type="UniProtKB" id="P33778"/>
    </source>
</evidence>
<evidence type="ECO:0000250" key="3">
    <source>
        <dbReference type="UniProtKB" id="P58876"/>
    </source>
</evidence>
<evidence type="ECO:0000250" key="4">
    <source>
        <dbReference type="UniProtKB" id="P62807"/>
    </source>
</evidence>
<evidence type="ECO:0000250" key="5">
    <source>
        <dbReference type="UniProtKB" id="Q00729"/>
    </source>
</evidence>
<evidence type="ECO:0000250" key="6">
    <source>
        <dbReference type="UniProtKB" id="Q5QNW6"/>
    </source>
</evidence>
<evidence type="ECO:0000250" key="7">
    <source>
        <dbReference type="UniProtKB" id="Q64475"/>
    </source>
</evidence>
<evidence type="ECO:0000250" key="8">
    <source>
        <dbReference type="UniProtKB" id="Q6ZWY9"/>
    </source>
</evidence>
<evidence type="ECO:0000250" key="9">
    <source>
        <dbReference type="UniProtKB" id="Q96A08"/>
    </source>
</evidence>
<evidence type="ECO:0000250" key="10">
    <source>
        <dbReference type="UniProtKB" id="Q99877"/>
    </source>
</evidence>
<evidence type="ECO:0000256" key="11">
    <source>
        <dbReference type="SAM" id="MobiDB-lite"/>
    </source>
</evidence>
<evidence type="ECO:0000305" key="12"/>
<evidence type="ECO:0000305" key="13">
    <source>
    </source>
</evidence>
<accession>Q32L48</accession>
<dbReference type="EMBL" id="BC109769">
    <property type="protein sequence ID" value="AAI09770.1"/>
    <property type="molecule type" value="mRNA"/>
</dbReference>
<dbReference type="RefSeq" id="NP_001075211.1">
    <property type="nucleotide sequence ID" value="NM_001081742.1"/>
</dbReference>
<dbReference type="SMR" id="Q32L48"/>
<dbReference type="FunCoup" id="Q32L48">
    <property type="interactions" value="274"/>
</dbReference>
<dbReference type="GlyCosmos" id="Q32L48">
    <property type="glycosylation" value="1 site, No reported glycans"/>
</dbReference>
<dbReference type="GlyGen" id="Q32L48">
    <property type="glycosylation" value="1 site"/>
</dbReference>
<dbReference type="iPTMnet" id="Q32L48"/>
<dbReference type="PeptideAtlas" id="Q32L48"/>
<dbReference type="GeneID" id="614958"/>
<dbReference type="KEGG" id="bta:614958"/>
<dbReference type="CTD" id="8341"/>
<dbReference type="eggNOG" id="KOG1744">
    <property type="taxonomic scope" value="Eukaryota"/>
</dbReference>
<dbReference type="InParanoid" id="Q32L48"/>
<dbReference type="OrthoDB" id="9802428at2759"/>
<dbReference type="Proteomes" id="UP000009136">
    <property type="component" value="Unplaced"/>
</dbReference>
<dbReference type="GO" id="GO:0000786">
    <property type="term" value="C:nucleosome"/>
    <property type="evidence" value="ECO:0007669"/>
    <property type="project" value="UniProtKB-KW"/>
</dbReference>
<dbReference type="GO" id="GO:0005634">
    <property type="term" value="C:nucleus"/>
    <property type="evidence" value="ECO:0007669"/>
    <property type="project" value="UniProtKB-SubCell"/>
</dbReference>
<dbReference type="GO" id="GO:0003677">
    <property type="term" value="F:DNA binding"/>
    <property type="evidence" value="ECO:0007669"/>
    <property type="project" value="UniProtKB-KW"/>
</dbReference>
<dbReference type="GO" id="GO:0046982">
    <property type="term" value="F:protein heterodimerization activity"/>
    <property type="evidence" value="ECO:0007669"/>
    <property type="project" value="InterPro"/>
</dbReference>
<dbReference type="GO" id="GO:0030527">
    <property type="term" value="F:structural constituent of chromatin"/>
    <property type="evidence" value="ECO:0007669"/>
    <property type="project" value="InterPro"/>
</dbReference>
<dbReference type="CDD" id="cd22910">
    <property type="entry name" value="HFD_H2B"/>
    <property type="match status" value="1"/>
</dbReference>
<dbReference type="FunFam" id="1.10.20.10:FF:000003">
    <property type="entry name" value="Histone H2B"/>
    <property type="match status" value="1"/>
</dbReference>
<dbReference type="Gene3D" id="1.10.20.10">
    <property type="entry name" value="Histone, subunit A"/>
    <property type="match status" value="1"/>
</dbReference>
<dbReference type="InterPro" id="IPR009072">
    <property type="entry name" value="Histone-fold"/>
</dbReference>
<dbReference type="InterPro" id="IPR007125">
    <property type="entry name" value="Histone_H2A/H2B/H3"/>
</dbReference>
<dbReference type="InterPro" id="IPR000558">
    <property type="entry name" value="Histone_H2B"/>
</dbReference>
<dbReference type="InterPro" id="IPR055333">
    <property type="entry name" value="HISTONE_H2B_site"/>
</dbReference>
<dbReference type="PANTHER" id="PTHR23428">
    <property type="entry name" value="HISTONE H2B"/>
    <property type="match status" value="1"/>
</dbReference>
<dbReference type="Pfam" id="PF00125">
    <property type="entry name" value="Histone"/>
    <property type="match status" value="1"/>
</dbReference>
<dbReference type="PRINTS" id="PR00621">
    <property type="entry name" value="HISTONEH2B"/>
</dbReference>
<dbReference type="SMART" id="SM00427">
    <property type="entry name" value="H2B"/>
    <property type="match status" value="1"/>
</dbReference>
<dbReference type="SUPFAM" id="SSF47113">
    <property type="entry name" value="Histone-fold"/>
    <property type="match status" value="1"/>
</dbReference>
<dbReference type="PROSITE" id="PS00357">
    <property type="entry name" value="HISTONE_H2B"/>
    <property type="match status" value="1"/>
</dbReference>
<comment type="function">
    <text>Core component of nucleosome. Nucleosomes wrap and compact DNA into chromatin, limiting DNA accessibility to the cellular machineries which require DNA as a template. Histones thereby play a central role in transcription regulation, DNA repair, DNA replication and chromosomal stability. DNA accessibility is regulated via a complex set of post-translational modifications of histones, also called histone code, and nucleosome remodeling.</text>
</comment>
<comment type="subunit">
    <text>The nucleosome is a histone octamer containing two molecules each of H2A, H2B, H3 and H4 assembled in one H3-H4 heterotetramer and two H2A-H2B heterodimers. The octamer wraps approximately 147 bp of DNA.</text>
</comment>
<comment type="subcellular location">
    <subcellularLocation>
        <location>Nucleus</location>
    </subcellularLocation>
    <subcellularLocation>
        <location>Chromosome</location>
    </subcellularLocation>
</comment>
<comment type="PTM">
    <text evidence="2">Monoubiquitination at Lys-35 (H2BK34Ub) by the MSL1/MSL2 dimer is required for histone H3 'Lys-4' (H3K4me) and 'Lys-79' (H3K79me) methylation and transcription activation at specific gene loci, such as HOXA9 and MEIS1 loci. Similarly, monoubiquitination at Lys-121 (H2BK120Ub) by the RNF20/40 complex gives a specific tag for epigenetic transcriptional activation and is also prerequisite for histone H3 'Lys-4' and 'Lys-79' methylation. It also functions cooperatively with the FACT dimer to stimulate elongation by RNA polymerase II. H2BK120Ub also acts as a regulator of mRNA splicing: deubiquitination by USP49 is required for efficient cotranscriptional splicing of a large set of exons (By similarity).</text>
</comment>
<comment type="PTM">
    <text evidence="2 7">Phosphorylated on Ser-15 (H2BS14ph) by STK4/MST1 during apoptosis; which facilitates apoptotic chromatin condensation. Also phosphorylated on Ser-15 in response to DNA double strand breaks (DSBs), and in correlation with somatic hypermutation and immunoglobulin class-switch recombination. Phosphorylation at Ser-37 (H2BS36ph) by AMPK in response to stress promotes transcription (By similarity).</text>
</comment>
<comment type="PTM">
    <text evidence="4">GlcNAcylation at Ser-113 promotes monoubiquitination of Lys-121. It fluctuates in response to extracellular glucose, and associates with transcribed genes (By similarity).</text>
</comment>
<comment type="PTM">
    <text evidence="2 8">ADP-ribosylated by PARP1 or PARP2 on Ser-7 (H2BS6ADPr) in response to DNA damage (By similarity). H2BS6ADPr promotes recruitment of CHD1L (By similarity). Mono-ADP-ribosylated on Glu-3 (H2BE2ADPr) by PARP3 in response to single-strand breaks (By similarity). Poly ADP-ribosylation on Glu-36 (H2BE35ADPr) by PARP1 regulates adipogenesis: it inhibits phosphorylation at Ser-37 (H2BS36ph), thereby blocking expression of pro-adipogenetic genes (By similarity).</text>
</comment>
<comment type="PTM">
    <text evidence="2">Crotonylation (Kcr) is specifically present in male germ cells and marks testis-specific genes in post-meiotic cells, including X-linked genes that escape sex chromosome inactivation in haploid cells. Crotonylation marks active promoters and enhancers and confers resistance to transcriptional repressors. It is also associated with post-meiotically activated genes on autosomes (By similarity).</text>
</comment>
<comment type="PTM">
    <text evidence="2">Lactylated in macrophages by EP300/P300 by using lactoyl-CoA directly derived from endogenous or exogenous lactate, leading to stimulates gene transcription.</text>
</comment>
<comment type="similarity">
    <text evidence="12">Belongs to the histone H2B family.</text>
</comment>
<keyword id="KW-0007">Acetylation</keyword>
<keyword id="KW-0013">ADP-ribosylation</keyword>
<keyword id="KW-0158">Chromosome</keyword>
<keyword id="KW-0238">DNA-binding</keyword>
<keyword id="KW-0325">Glycoprotein</keyword>
<keyword id="KW-0379">Hydroxylation</keyword>
<keyword id="KW-1017">Isopeptide bond</keyword>
<keyword id="KW-0488">Methylation</keyword>
<keyword id="KW-0544">Nucleosome core</keyword>
<keyword id="KW-0539">Nucleus</keyword>
<keyword id="KW-0597">Phosphoprotein</keyword>
<keyword id="KW-1185">Reference proteome</keyword>
<keyword id="KW-0832">Ubl conjugation</keyword>
<feature type="initiator methionine" description="Removed" evidence="1">
    <location>
        <position position="1"/>
    </location>
</feature>
<feature type="chain" id="PRO_0000244822" description="Histone H2B type 1-N">
    <location>
        <begin position="2"/>
        <end position="126"/>
    </location>
</feature>
<feature type="region of interest" description="Disordered" evidence="11">
    <location>
        <begin position="1"/>
        <end position="36"/>
    </location>
</feature>
<feature type="compositionally biased region" description="Low complexity" evidence="11">
    <location>
        <begin position="1"/>
        <end position="12"/>
    </location>
</feature>
<feature type="modified residue" description="N-acetylproline" evidence="1">
    <location>
        <position position="2"/>
    </location>
</feature>
<feature type="modified residue" description="ADP-ribosyl glutamic acid" evidence="2">
    <location>
        <position position="3"/>
    </location>
</feature>
<feature type="modified residue" description="N6-(2-hydroxyisobutyryl)lysine; alternate" evidence="2">
    <location>
        <position position="6"/>
    </location>
</feature>
<feature type="modified residue" description="N6-(beta-hydroxybutyryl)lysine; alternate" evidence="7">
    <location>
        <position position="6"/>
    </location>
</feature>
<feature type="modified residue" description="N6-acetyllysine; alternate" evidence="10">
    <location>
        <position position="6"/>
    </location>
</feature>
<feature type="modified residue" description="N6-butyryllysine; alternate" evidence="2">
    <location>
        <position position="6"/>
    </location>
</feature>
<feature type="modified residue" description="N6-crotonyllysine; alternate" evidence="2">
    <location>
        <position position="6"/>
    </location>
</feature>
<feature type="modified residue" description="N6-lactoyllysine; alternate" evidence="2">
    <location>
        <position position="6"/>
    </location>
</feature>
<feature type="modified residue" description="ADP-ribosylserine" evidence="2">
    <location>
        <position position="7"/>
    </location>
</feature>
<feature type="modified residue" description="N6-(beta-hydroxybutyryl)lysine; alternate" evidence="7">
    <location>
        <position position="12"/>
    </location>
</feature>
<feature type="modified residue" description="N6-acetyllysine; alternate" evidence="10">
    <location>
        <position position="12"/>
    </location>
</feature>
<feature type="modified residue" description="N6-crotonyllysine; alternate" evidence="2">
    <location>
        <position position="12"/>
    </location>
</feature>
<feature type="modified residue" description="N6-lactoyllysine; alternate" evidence="2">
    <location>
        <position position="12"/>
    </location>
</feature>
<feature type="modified residue" description="N6-(2-hydroxyisobutyryl)lysine; alternate" evidence="2">
    <location>
        <position position="13"/>
    </location>
</feature>
<feature type="modified residue" description="N6-acetyllysine; alternate" evidence="10">
    <location>
        <position position="13"/>
    </location>
</feature>
<feature type="modified residue" description="N6-crotonyllysine; alternate" evidence="2">
    <location>
        <position position="13"/>
    </location>
</feature>
<feature type="modified residue" description="Phosphoserine; by STK4/MST1" evidence="10">
    <location>
        <position position="15"/>
    </location>
</feature>
<feature type="modified residue" description="N6-acetyllysine; alternate" evidence="10">
    <location>
        <position position="16"/>
    </location>
</feature>
<feature type="modified residue" description="N6-crotonyllysine; alternate" evidence="2">
    <location>
        <position position="16"/>
    </location>
</feature>
<feature type="modified residue" description="N6-lactoyllysine; alternate" evidence="2">
    <location>
        <position position="16"/>
    </location>
</feature>
<feature type="modified residue" description="N6-acetyllysine; alternate" evidence="10">
    <location>
        <position position="17"/>
    </location>
</feature>
<feature type="modified residue" description="N6-crotonyllysine; alternate" evidence="2">
    <location>
        <position position="17"/>
    </location>
</feature>
<feature type="modified residue" description="N6-glutaryllysine; alternate" evidence="2">
    <location>
        <position position="17"/>
    </location>
</feature>
<feature type="modified residue" description="N6-lactoyllysine; alternate" evidence="2">
    <location>
        <position position="17"/>
    </location>
</feature>
<feature type="modified residue" description="N6-(2-hydroxyisobutyryl)lysine; alternate" evidence="2">
    <location>
        <position position="21"/>
    </location>
</feature>
<feature type="modified residue" description="N6-(beta-hydroxybutyryl)lysine; alternate" evidence="7">
    <location>
        <position position="21"/>
    </location>
</feature>
<feature type="modified residue" description="N6-acetyllysine; alternate" evidence="10">
    <location>
        <position position="21"/>
    </location>
</feature>
<feature type="modified residue" description="N6-butyryllysine; alternate" evidence="2">
    <location>
        <position position="21"/>
    </location>
</feature>
<feature type="modified residue" description="N6-crotonyllysine; alternate" evidence="2">
    <location>
        <position position="21"/>
    </location>
</feature>
<feature type="modified residue" description="N6-lactoyllysine; alternate" evidence="2">
    <location>
        <position position="21"/>
    </location>
</feature>
<feature type="modified residue" description="N6-(2-hydroxyisobutyryl)lysine; alternate" evidence="2">
    <location>
        <position position="24"/>
    </location>
</feature>
<feature type="modified residue" description="N6-acetyllysine; alternate" evidence="2">
    <location>
        <position position="24"/>
    </location>
</feature>
<feature type="modified residue" description="N6-crotonyllysine; alternate" evidence="2">
    <location>
        <position position="24"/>
    </location>
</feature>
<feature type="modified residue" description="N6-lactoyllysine; alternate" evidence="2">
    <location>
        <position position="24"/>
    </location>
</feature>
<feature type="modified residue" description="N6-(2-hydroxyisobutyryl)lysine" evidence="2">
    <location>
        <position position="25"/>
    </location>
</feature>
<feature type="modified residue" description="N6-(2-hydroxyisobutyryl)lysine; alternate" evidence="2">
    <location>
        <position position="35"/>
    </location>
</feature>
<feature type="modified residue" description="N6-(beta-hydroxybutyryl)lysine; alternate" evidence="7">
    <location>
        <position position="35"/>
    </location>
</feature>
<feature type="modified residue" description="N6-crotonyllysine; alternate" evidence="2">
    <location>
        <position position="35"/>
    </location>
</feature>
<feature type="modified residue" description="N6-glutaryllysine; alternate" evidence="2">
    <location>
        <position position="35"/>
    </location>
</feature>
<feature type="modified residue" description="N6-succinyllysine; alternate" evidence="10">
    <location>
        <position position="35"/>
    </location>
</feature>
<feature type="modified residue" description="PolyADP-ribosyl glutamic acid" evidence="7">
    <location>
        <position position="36"/>
    </location>
</feature>
<feature type="modified residue" description="Phosphoserine; by AMPK" evidence="7">
    <location>
        <position position="37"/>
    </location>
</feature>
<feature type="modified residue" description="N6-(2-hydroxyisobutyryl)lysine; alternate" evidence="2">
    <location>
        <position position="44"/>
    </location>
</feature>
<feature type="modified residue" description="N6-glutaryllysine; alternate" evidence="2">
    <location>
        <position position="44"/>
    </location>
</feature>
<feature type="modified residue" description="N6-lactoyllysine; alternate" evidence="2">
    <location>
        <position position="44"/>
    </location>
</feature>
<feature type="modified residue" description="N6-(2-hydroxyisobutyryl)lysine; alternate" evidence="2">
    <location>
        <position position="47"/>
    </location>
</feature>
<feature type="modified residue" description="N6-glutaryllysine; alternate" evidence="2">
    <location>
        <position position="47"/>
    </location>
</feature>
<feature type="modified residue" description="N6-methyllysine; alternate" evidence="10">
    <location>
        <position position="47"/>
    </location>
</feature>
<feature type="modified residue" description="N6,N6-dimethyllysine; alternate" evidence="10">
    <location>
        <position position="58"/>
    </location>
</feature>
<feature type="modified residue" description="N6-(2-hydroxyisobutyryl)lysine; alternate" evidence="2">
    <location>
        <position position="58"/>
    </location>
</feature>
<feature type="modified residue" description="Dimethylated arginine" evidence="9">
    <location>
        <position position="80"/>
    </location>
</feature>
<feature type="modified residue" description="N6,N6,N6-trimethyllysine; alternate" evidence="9">
    <location>
        <position position="86"/>
    </location>
</feature>
<feature type="modified residue" description="N6-(2-hydroxyisobutyryl)lysine; alternate" evidence="2">
    <location>
        <position position="86"/>
    </location>
</feature>
<feature type="modified residue" description="N6-acetyllysine; alternate" evidence="9">
    <location>
        <position position="86"/>
    </location>
</feature>
<feature type="modified residue" description="N6-lactoyllysine; alternate" evidence="2">
    <location>
        <position position="86"/>
    </location>
</feature>
<feature type="modified residue" description="Omega-N-methylarginine" evidence="9">
    <location>
        <position position="87"/>
    </location>
</feature>
<feature type="modified residue" description="Omega-N-methylarginine" evidence="9">
    <location>
        <position position="93"/>
    </location>
</feature>
<feature type="modified residue" description="N6-(2-hydroxyisobutyryl)lysine; alternate" evidence="2">
    <location>
        <position position="109"/>
    </location>
</feature>
<feature type="modified residue" description="N6-glutaryllysine; alternate" evidence="2">
    <location>
        <position position="109"/>
    </location>
</feature>
<feature type="modified residue" description="N6-lactoyllysine; alternate" evidence="2">
    <location>
        <position position="109"/>
    </location>
</feature>
<feature type="modified residue" description="N6-methyllysine; alternate" evidence="10">
    <location>
        <position position="109"/>
    </location>
</feature>
<feature type="modified residue" description="Phosphothreonine" evidence="5">
    <location>
        <position position="116"/>
    </location>
</feature>
<feature type="modified residue" description="N6-(2-hydroxyisobutyryl)lysine; alternate" evidence="2">
    <location>
        <position position="117"/>
    </location>
</feature>
<feature type="modified residue" description="N6-(beta-hydroxybutyryl)lysine; alternate" evidence="7">
    <location>
        <position position="117"/>
    </location>
</feature>
<feature type="modified residue" description="N6-glutaryllysine; alternate" evidence="2">
    <location>
        <position position="117"/>
    </location>
</feature>
<feature type="modified residue" description="N6-lactoyllysine; alternate" evidence="2">
    <location>
        <position position="117"/>
    </location>
</feature>
<feature type="modified residue" description="N6-methylated lysine; alternate" evidence="5">
    <location>
        <position position="117"/>
    </location>
</feature>
<feature type="modified residue" description="N6-succinyllysine; alternate" evidence="10">
    <location>
        <position position="117"/>
    </location>
</feature>
<feature type="modified residue" description="N6-(2-hydroxyisobutyryl)lysine; alternate" evidence="2">
    <location>
        <position position="121"/>
    </location>
</feature>
<feature type="modified residue" description="N6-glutaryllysine; alternate" evidence="2">
    <location>
        <position position="121"/>
    </location>
</feature>
<feature type="modified residue" description="N6-lactoyllysine; alternate" evidence="2">
    <location>
        <position position="121"/>
    </location>
</feature>
<feature type="modified residue" description="N6-succinyllysine; alternate" evidence="10">
    <location>
        <position position="121"/>
    </location>
</feature>
<feature type="glycosylation site" description="O-linked (GlcNAc) serine" evidence="4">
    <location>
        <position position="113"/>
    </location>
</feature>
<feature type="cross-link" description="Glycyl lysine isopeptide (Lys-Gly) (interchain with G-Cter in SUMO2); alternate" evidence="3">
    <location>
        <position position="6"/>
    </location>
</feature>
<feature type="cross-link" description="Glycyl lysine isopeptide (Lys-Gly) (interchain with G-Cter in SUMO2); alternate" evidence="6">
    <location>
        <position position="21"/>
    </location>
</feature>
<feature type="cross-link" description="Glycyl lysine isopeptide (Lys-Gly) (interchain with G-Cter in ubiquitin); alternate" evidence="10">
    <location>
        <position position="35"/>
    </location>
</feature>
<feature type="cross-link" description="Glycyl lysine isopeptide (Lys-Gly) (interchain with G-Cter in ubiquitin); alternate" evidence="13">
    <location>
        <position position="121"/>
    </location>
</feature>